<accession>A5VQQ8</accession>
<evidence type="ECO:0000255" key="1">
    <source>
        <dbReference type="HAMAP-Rule" id="MF_00056"/>
    </source>
</evidence>
<protein>
    <recommendedName>
        <fullName evidence="1">2-dehydro-3-deoxyphosphooctonate aldolase</fullName>
        <ecNumber evidence="1">2.5.1.55</ecNumber>
    </recommendedName>
    <alternativeName>
        <fullName evidence="1">3-deoxy-D-manno-octulosonic acid 8-phosphate synthase</fullName>
    </alternativeName>
    <alternativeName>
        <fullName evidence="1">KDO-8-phosphate synthase</fullName>
        <shortName evidence="1">KDO 8-P synthase</shortName>
        <shortName evidence="1">KDOPS</shortName>
    </alternativeName>
    <alternativeName>
        <fullName evidence="1">Phospho-2-dehydro-3-deoxyoctonate aldolase</fullName>
    </alternativeName>
</protein>
<sequence>MVTANSTVKVGNVTFSNSAPLALIAGPCQMETRDHAFEMAGRLKEMTDKLGIGLVYKSSFDKANRTSLKAARGIGLEKALEVFSDLKKEYGFPVLTDIHTEEQCAAVAPVVDVLQIPAFLCRQTDLLIAAARTGRVVNVKKGQFLAPWDMKNVLAKITESGNPNVLATERGVSFGYNTLVSDMRALPIMAGLGAPVIFDATHSVQQPGGQGGSTGGQREFVETLARAAVAVGVAGLFIETHEDPDNAPSDGPNMVPIDKMPALLEKLMAFDRIAKAL</sequence>
<proteinExistence type="inferred from homology"/>
<dbReference type="EC" id="2.5.1.55" evidence="1"/>
<dbReference type="EMBL" id="CP000708">
    <property type="protein sequence ID" value="ABQ60795.1"/>
    <property type="molecule type" value="Genomic_DNA"/>
</dbReference>
<dbReference type="RefSeq" id="WP_002964262.1">
    <property type="nucleotide sequence ID" value="NC_009505.1"/>
</dbReference>
<dbReference type="SMR" id="A5VQQ8"/>
<dbReference type="GeneID" id="97533614"/>
<dbReference type="KEGG" id="bov:BOV_1093"/>
<dbReference type="HOGENOM" id="CLU_036666_0_0_5"/>
<dbReference type="PhylomeDB" id="A5VQQ8"/>
<dbReference type="UniPathway" id="UPA00030"/>
<dbReference type="UniPathway" id="UPA00357">
    <property type="reaction ID" value="UER00474"/>
</dbReference>
<dbReference type="Proteomes" id="UP000006383">
    <property type="component" value="Chromosome I"/>
</dbReference>
<dbReference type="GO" id="GO:0005737">
    <property type="term" value="C:cytoplasm"/>
    <property type="evidence" value="ECO:0007669"/>
    <property type="project" value="UniProtKB-SubCell"/>
</dbReference>
<dbReference type="GO" id="GO:0008676">
    <property type="term" value="F:3-deoxy-8-phosphooctulonate synthase activity"/>
    <property type="evidence" value="ECO:0007669"/>
    <property type="project" value="UniProtKB-UniRule"/>
</dbReference>
<dbReference type="GO" id="GO:0019294">
    <property type="term" value="P:keto-3-deoxy-D-manno-octulosonic acid biosynthetic process"/>
    <property type="evidence" value="ECO:0007669"/>
    <property type="project" value="UniProtKB-UniRule"/>
</dbReference>
<dbReference type="Gene3D" id="3.20.20.70">
    <property type="entry name" value="Aldolase class I"/>
    <property type="match status" value="1"/>
</dbReference>
<dbReference type="HAMAP" id="MF_00056">
    <property type="entry name" value="KDO8P_synth"/>
    <property type="match status" value="1"/>
</dbReference>
<dbReference type="InterPro" id="IPR013785">
    <property type="entry name" value="Aldolase_TIM"/>
</dbReference>
<dbReference type="InterPro" id="IPR006218">
    <property type="entry name" value="DAHP1/KDSA"/>
</dbReference>
<dbReference type="InterPro" id="IPR006269">
    <property type="entry name" value="KDO8P_synthase"/>
</dbReference>
<dbReference type="NCBIfam" id="TIGR01362">
    <property type="entry name" value="KDO8P_synth"/>
    <property type="match status" value="1"/>
</dbReference>
<dbReference type="NCBIfam" id="NF003543">
    <property type="entry name" value="PRK05198.1"/>
    <property type="match status" value="1"/>
</dbReference>
<dbReference type="PANTHER" id="PTHR21057">
    <property type="entry name" value="PHOSPHO-2-DEHYDRO-3-DEOXYHEPTONATE ALDOLASE"/>
    <property type="match status" value="1"/>
</dbReference>
<dbReference type="Pfam" id="PF00793">
    <property type="entry name" value="DAHP_synth_1"/>
    <property type="match status" value="1"/>
</dbReference>
<dbReference type="SUPFAM" id="SSF51569">
    <property type="entry name" value="Aldolase"/>
    <property type="match status" value="1"/>
</dbReference>
<gene>
    <name evidence="1" type="primary">kdsA</name>
    <name type="ordered locus">BOV_1093</name>
</gene>
<feature type="chain" id="PRO_0000304437" description="2-dehydro-3-deoxyphosphooctonate aldolase">
    <location>
        <begin position="1"/>
        <end position="277"/>
    </location>
</feature>
<organism>
    <name type="scientific">Brucella ovis (strain ATCC 25840 / 63/290 / NCTC 10512)</name>
    <dbReference type="NCBI Taxonomy" id="444178"/>
    <lineage>
        <taxon>Bacteria</taxon>
        <taxon>Pseudomonadati</taxon>
        <taxon>Pseudomonadota</taxon>
        <taxon>Alphaproteobacteria</taxon>
        <taxon>Hyphomicrobiales</taxon>
        <taxon>Brucellaceae</taxon>
        <taxon>Brucella/Ochrobactrum group</taxon>
        <taxon>Brucella</taxon>
    </lineage>
</organism>
<name>KDSA_BRUO2</name>
<reference key="1">
    <citation type="journal article" date="2009" name="PLoS ONE">
        <title>Genome degradation in Brucella ovis corresponds with narrowing of its host range and tissue tropism.</title>
        <authorList>
            <person name="Tsolis R.M."/>
            <person name="Seshadri R."/>
            <person name="Santos R.L."/>
            <person name="Sangari F.J."/>
            <person name="Lobo J.M."/>
            <person name="de Jong M.F."/>
            <person name="Ren Q."/>
            <person name="Myers G."/>
            <person name="Brinkac L.M."/>
            <person name="Nelson W.C."/>
            <person name="Deboy R.T."/>
            <person name="Angiuoli S."/>
            <person name="Khouri H."/>
            <person name="Dimitrov G."/>
            <person name="Robinson J.R."/>
            <person name="Mulligan S."/>
            <person name="Walker R.L."/>
            <person name="Elzer P.E."/>
            <person name="Hassan K.A."/>
            <person name="Paulsen I.T."/>
        </authorList>
    </citation>
    <scope>NUCLEOTIDE SEQUENCE [LARGE SCALE GENOMIC DNA]</scope>
    <source>
        <strain>ATCC 25840 / 63/290 / NCTC 10512</strain>
    </source>
</reference>
<comment type="catalytic activity">
    <reaction evidence="1">
        <text>D-arabinose 5-phosphate + phosphoenolpyruvate + H2O = 3-deoxy-alpha-D-manno-2-octulosonate-8-phosphate + phosphate</text>
        <dbReference type="Rhea" id="RHEA:14053"/>
        <dbReference type="ChEBI" id="CHEBI:15377"/>
        <dbReference type="ChEBI" id="CHEBI:43474"/>
        <dbReference type="ChEBI" id="CHEBI:57693"/>
        <dbReference type="ChEBI" id="CHEBI:58702"/>
        <dbReference type="ChEBI" id="CHEBI:85985"/>
        <dbReference type="EC" id="2.5.1.55"/>
    </reaction>
</comment>
<comment type="pathway">
    <text evidence="1">Carbohydrate biosynthesis; 3-deoxy-D-manno-octulosonate biosynthesis; 3-deoxy-D-manno-octulosonate from D-ribulose 5-phosphate: step 2/3.</text>
</comment>
<comment type="pathway">
    <text evidence="1">Bacterial outer membrane biogenesis; lipopolysaccharide biosynthesis.</text>
</comment>
<comment type="subcellular location">
    <subcellularLocation>
        <location evidence="1">Cytoplasm</location>
    </subcellularLocation>
</comment>
<comment type="similarity">
    <text evidence="1">Belongs to the KdsA family.</text>
</comment>
<keyword id="KW-0963">Cytoplasm</keyword>
<keyword id="KW-0448">Lipopolysaccharide biosynthesis</keyword>
<keyword id="KW-0808">Transferase</keyword>